<proteinExistence type="inferred from homology"/>
<dbReference type="EC" id="4.2.99.20" evidence="1"/>
<dbReference type="EMBL" id="AM286415">
    <property type="protein sequence ID" value="CAL11469.1"/>
    <property type="status" value="ALT_INIT"/>
    <property type="molecule type" value="Genomic_DNA"/>
</dbReference>
<dbReference type="RefSeq" id="YP_001005691.1">
    <property type="nucleotide sequence ID" value="NC_008800.1"/>
</dbReference>
<dbReference type="SMR" id="A1JKU0"/>
<dbReference type="ESTHER" id="yere8-menh">
    <property type="family name" value="MenH_SHCHC"/>
</dbReference>
<dbReference type="KEGG" id="yen:YE1376"/>
<dbReference type="PATRIC" id="fig|393305.7.peg.1496"/>
<dbReference type="eggNOG" id="COG0596">
    <property type="taxonomic scope" value="Bacteria"/>
</dbReference>
<dbReference type="HOGENOM" id="CLU_020336_38_2_6"/>
<dbReference type="OrthoDB" id="9808398at2"/>
<dbReference type="UniPathway" id="UPA00079"/>
<dbReference type="UniPathway" id="UPA01057">
    <property type="reaction ID" value="UER00900"/>
</dbReference>
<dbReference type="Proteomes" id="UP000000642">
    <property type="component" value="Chromosome"/>
</dbReference>
<dbReference type="GO" id="GO:0070205">
    <property type="term" value="F:2-succinyl-6-hydroxy-2,4-cyclohexadiene-1-carboxylate synthase activity"/>
    <property type="evidence" value="ECO:0007669"/>
    <property type="project" value="UniProtKB-UniRule"/>
</dbReference>
<dbReference type="GO" id="GO:0009234">
    <property type="term" value="P:menaquinone biosynthetic process"/>
    <property type="evidence" value="ECO:0007669"/>
    <property type="project" value="UniProtKB-UniRule"/>
</dbReference>
<dbReference type="Gene3D" id="3.40.50.1820">
    <property type="entry name" value="alpha/beta hydrolase"/>
    <property type="match status" value="1"/>
</dbReference>
<dbReference type="HAMAP" id="MF_01660">
    <property type="entry name" value="MenH"/>
    <property type="match status" value="1"/>
</dbReference>
<dbReference type="InterPro" id="IPR000073">
    <property type="entry name" value="AB_hydrolase_1"/>
</dbReference>
<dbReference type="InterPro" id="IPR029058">
    <property type="entry name" value="AB_hydrolase_fold"/>
</dbReference>
<dbReference type="InterPro" id="IPR022485">
    <property type="entry name" value="SHCHC_synthase_MenH"/>
</dbReference>
<dbReference type="NCBIfam" id="TIGR03695">
    <property type="entry name" value="menH_SHCHC"/>
    <property type="match status" value="1"/>
</dbReference>
<dbReference type="NCBIfam" id="NF008340">
    <property type="entry name" value="PRK11126.1"/>
    <property type="match status" value="1"/>
</dbReference>
<dbReference type="PANTHER" id="PTHR42916">
    <property type="entry name" value="2-SUCCINYL-5-ENOLPYRUVYL-6-HYDROXY-3-CYCLOHEXENE-1-CARBOXYLATE SYNTHASE"/>
    <property type="match status" value="1"/>
</dbReference>
<dbReference type="PANTHER" id="PTHR42916:SF1">
    <property type="entry name" value="PROTEIN PHYLLO, CHLOROPLASTIC"/>
    <property type="match status" value="1"/>
</dbReference>
<dbReference type="Pfam" id="PF12697">
    <property type="entry name" value="Abhydrolase_6"/>
    <property type="match status" value="1"/>
</dbReference>
<dbReference type="SUPFAM" id="SSF53474">
    <property type="entry name" value="alpha/beta-Hydrolases"/>
    <property type="match status" value="1"/>
</dbReference>
<protein>
    <recommendedName>
        <fullName evidence="1">2-succinyl-6-hydroxy-2,4-cyclohexadiene-1-carboxylate synthase</fullName>
        <shortName evidence="1">SHCHC synthase</shortName>
        <ecNumber evidence="1">4.2.99.20</ecNumber>
    </recommendedName>
</protein>
<gene>
    <name evidence="1" type="primary">menH</name>
    <name type="ordered locus">YE1376</name>
</gene>
<evidence type="ECO:0000255" key="1">
    <source>
        <dbReference type="HAMAP-Rule" id="MF_01660"/>
    </source>
</evidence>
<evidence type="ECO:0000305" key="2"/>
<keyword id="KW-0456">Lyase</keyword>
<keyword id="KW-0474">Menaquinone biosynthesis</keyword>
<feature type="chain" id="PRO_0000341929" description="2-succinyl-6-hydroxy-2,4-cyclohexadiene-1-carboxylate synthase">
    <location>
        <begin position="1"/>
        <end position="274"/>
    </location>
</feature>
<comment type="function">
    <text evidence="1">Catalyzes a proton abstraction reaction that results in 2,5-elimination of pyruvate from 2-succinyl-5-enolpyruvyl-6-hydroxy-3-cyclohexene-1-carboxylate (SEPHCHC) and the formation of 2-succinyl-6-hydroxy-2,4-cyclohexadiene-1-carboxylate (SHCHC).</text>
</comment>
<comment type="catalytic activity">
    <reaction evidence="1">
        <text>5-enolpyruvoyl-6-hydroxy-2-succinyl-cyclohex-3-ene-1-carboxylate = (1R,6R)-6-hydroxy-2-succinyl-cyclohexa-2,4-diene-1-carboxylate + pyruvate</text>
        <dbReference type="Rhea" id="RHEA:25597"/>
        <dbReference type="ChEBI" id="CHEBI:15361"/>
        <dbReference type="ChEBI" id="CHEBI:58689"/>
        <dbReference type="ChEBI" id="CHEBI:58818"/>
        <dbReference type="EC" id="4.2.99.20"/>
    </reaction>
</comment>
<comment type="pathway">
    <text evidence="1">Quinol/quinone metabolism; 1,4-dihydroxy-2-naphthoate biosynthesis; 1,4-dihydroxy-2-naphthoate from chorismate: step 3/7.</text>
</comment>
<comment type="pathway">
    <text evidence="1">Quinol/quinone metabolism; menaquinone biosynthesis.</text>
</comment>
<comment type="subunit">
    <text evidence="1">Monomer.</text>
</comment>
<comment type="similarity">
    <text evidence="1">Belongs to the AB hydrolase superfamily. MenH family.</text>
</comment>
<comment type="sequence caution" evidence="2">
    <conflict type="erroneous initiation">
        <sequence resource="EMBL-CDS" id="CAL11469"/>
    </conflict>
</comment>
<accession>A1JKU0</accession>
<sequence>MTLACCKLDPHPQSPARQHTGPWLVWLHGLLGSGQDWLPVAELCGDYPSLLIDLPGHGNSVALTTTGFEDISRQISETLQANGIREYWLAGYSLGGRIAMYHACYGHKVGLQGLLVEGGNLGLESDELRKARFEQDCQWAQRFRHEPLPQVLADWYQQDVFADLDSQQREQLVAVRANNHGPAVADMLEATSLGHQPWLLPALQCLSVPYTYLCGERDHKFQQVAHQYKLPLRTLARAGHNAHRANPGAFAALVLSFLSQSSFLPLSSFLPPSR</sequence>
<reference key="1">
    <citation type="journal article" date="2006" name="PLoS Genet.">
        <title>The complete genome sequence and comparative genome analysis of the high pathogenicity Yersinia enterocolitica strain 8081.</title>
        <authorList>
            <person name="Thomson N.R."/>
            <person name="Howard S."/>
            <person name="Wren B.W."/>
            <person name="Holden M.T.G."/>
            <person name="Crossman L."/>
            <person name="Challis G.L."/>
            <person name="Churcher C."/>
            <person name="Mungall K."/>
            <person name="Brooks K."/>
            <person name="Chillingworth T."/>
            <person name="Feltwell T."/>
            <person name="Abdellah Z."/>
            <person name="Hauser H."/>
            <person name="Jagels K."/>
            <person name="Maddison M."/>
            <person name="Moule S."/>
            <person name="Sanders M."/>
            <person name="Whitehead S."/>
            <person name="Quail M.A."/>
            <person name="Dougan G."/>
            <person name="Parkhill J."/>
            <person name="Prentice M.B."/>
        </authorList>
    </citation>
    <scope>NUCLEOTIDE SEQUENCE [LARGE SCALE GENOMIC DNA]</scope>
    <source>
        <strain>NCTC 13174 / 8081</strain>
    </source>
</reference>
<name>MENH_YERE8</name>
<organism>
    <name type="scientific">Yersinia enterocolitica serotype O:8 / biotype 1B (strain NCTC 13174 / 8081)</name>
    <dbReference type="NCBI Taxonomy" id="393305"/>
    <lineage>
        <taxon>Bacteria</taxon>
        <taxon>Pseudomonadati</taxon>
        <taxon>Pseudomonadota</taxon>
        <taxon>Gammaproteobacteria</taxon>
        <taxon>Enterobacterales</taxon>
        <taxon>Yersiniaceae</taxon>
        <taxon>Yersinia</taxon>
    </lineage>
</organism>